<reference key="1">
    <citation type="journal article" date="2003" name="Nucleic Acids Res.">
        <title>The complete genome sequence and analysis of Corynebacterium diphtheriae NCTC13129.</title>
        <authorList>
            <person name="Cerdeno-Tarraga A.-M."/>
            <person name="Efstratiou A."/>
            <person name="Dover L.G."/>
            <person name="Holden M.T.G."/>
            <person name="Pallen M.J."/>
            <person name="Bentley S.D."/>
            <person name="Besra G.S."/>
            <person name="Churcher C.M."/>
            <person name="James K.D."/>
            <person name="De Zoysa A."/>
            <person name="Chillingworth T."/>
            <person name="Cronin A."/>
            <person name="Dowd L."/>
            <person name="Feltwell T."/>
            <person name="Hamlin N."/>
            <person name="Holroyd S."/>
            <person name="Jagels K."/>
            <person name="Moule S."/>
            <person name="Quail M.A."/>
            <person name="Rabbinowitsch E."/>
            <person name="Rutherford K.M."/>
            <person name="Thomson N.R."/>
            <person name="Unwin L."/>
            <person name="Whitehead S."/>
            <person name="Barrell B.G."/>
            <person name="Parkhill J."/>
        </authorList>
    </citation>
    <scope>NUCLEOTIDE SEQUENCE [LARGE SCALE GENOMIC DNA]</scope>
    <source>
        <strain>ATCC 700971 / NCTC 13129 / Biotype gravis</strain>
    </source>
</reference>
<dbReference type="EMBL" id="BX248358">
    <property type="protein sequence ID" value="CAE50035.1"/>
    <property type="molecule type" value="Genomic_DNA"/>
</dbReference>
<dbReference type="RefSeq" id="WP_003851973.1">
    <property type="nucleotide sequence ID" value="NC_002935.2"/>
</dbReference>
<dbReference type="SMR" id="Q6NGK5"/>
<dbReference type="STRING" id="257309.DIP1508"/>
<dbReference type="GeneID" id="29421309"/>
<dbReference type="KEGG" id="cdi:DIP1508"/>
<dbReference type="HOGENOM" id="CLU_040318_2_2_11"/>
<dbReference type="Proteomes" id="UP000002198">
    <property type="component" value="Chromosome"/>
</dbReference>
<dbReference type="GO" id="GO:0022627">
    <property type="term" value="C:cytosolic small ribosomal subunit"/>
    <property type="evidence" value="ECO:0007669"/>
    <property type="project" value="TreeGrafter"/>
</dbReference>
<dbReference type="GO" id="GO:0003735">
    <property type="term" value="F:structural constituent of ribosome"/>
    <property type="evidence" value="ECO:0007669"/>
    <property type="project" value="InterPro"/>
</dbReference>
<dbReference type="GO" id="GO:0006412">
    <property type="term" value="P:translation"/>
    <property type="evidence" value="ECO:0007669"/>
    <property type="project" value="UniProtKB-UniRule"/>
</dbReference>
<dbReference type="CDD" id="cd01425">
    <property type="entry name" value="RPS2"/>
    <property type="match status" value="1"/>
</dbReference>
<dbReference type="FunFam" id="1.10.287.610:FF:000001">
    <property type="entry name" value="30S ribosomal protein S2"/>
    <property type="match status" value="1"/>
</dbReference>
<dbReference type="Gene3D" id="3.40.50.10490">
    <property type="entry name" value="Glucose-6-phosphate isomerase like protein, domain 1"/>
    <property type="match status" value="1"/>
</dbReference>
<dbReference type="Gene3D" id="1.10.287.610">
    <property type="entry name" value="Helix hairpin bin"/>
    <property type="match status" value="1"/>
</dbReference>
<dbReference type="HAMAP" id="MF_00291_B">
    <property type="entry name" value="Ribosomal_uS2_B"/>
    <property type="match status" value="1"/>
</dbReference>
<dbReference type="InterPro" id="IPR001865">
    <property type="entry name" value="Ribosomal_uS2"/>
</dbReference>
<dbReference type="InterPro" id="IPR005706">
    <property type="entry name" value="Ribosomal_uS2_bac/mit/plastid"/>
</dbReference>
<dbReference type="InterPro" id="IPR018130">
    <property type="entry name" value="Ribosomal_uS2_CS"/>
</dbReference>
<dbReference type="InterPro" id="IPR023591">
    <property type="entry name" value="Ribosomal_uS2_flav_dom_sf"/>
</dbReference>
<dbReference type="NCBIfam" id="TIGR01011">
    <property type="entry name" value="rpsB_bact"/>
    <property type="match status" value="1"/>
</dbReference>
<dbReference type="PANTHER" id="PTHR12534">
    <property type="entry name" value="30S RIBOSOMAL PROTEIN S2 PROKARYOTIC AND ORGANELLAR"/>
    <property type="match status" value="1"/>
</dbReference>
<dbReference type="PANTHER" id="PTHR12534:SF0">
    <property type="entry name" value="SMALL RIBOSOMAL SUBUNIT PROTEIN US2M"/>
    <property type="match status" value="1"/>
</dbReference>
<dbReference type="Pfam" id="PF00318">
    <property type="entry name" value="Ribosomal_S2"/>
    <property type="match status" value="1"/>
</dbReference>
<dbReference type="PRINTS" id="PR00395">
    <property type="entry name" value="RIBOSOMALS2"/>
</dbReference>
<dbReference type="SUPFAM" id="SSF52313">
    <property type="entry name" value="Ribosomal protein S2"/>
    <property type="match status" value="1"/>
</dbReference>
<dbReference type="PROSITE" id="PS00962">
    <property type="entry name" value="RIBOSOMAL_S2_1"/>
    <property type="match status" value="1"/>
</dbReference>
<evidence type="ECO:0000255" key="1">
    <source>
        <dbReference type="HAMAP-Rule" id="MF_00291"/>
    </source>
</evidence>
<evidence type="ECO:0000305" key="2"/>
<accession>Q6NGK5</accession>
<gene>
    <name evidence="1" type="primary">rpsB</name>
    <name type="ordered locus">DIP1508</name>
</gene>
<organism>
    <name type="scientific">Corynebacterium diphtheriae (strain ATCC 700971 / NCTC 13129 / Biotype gravis)</name>
    <dbReference type="NCBI Taxonomy" id="257309"/>
    <lineage>
        <taxon>Bacteria</taxon>
        <taxon>Bacillati</taxon>
        <taxon>Actinomycetota</taxon>
        <taxon>Actinomycetes</taxon>
        <taxon>Mycobacteriales</taxon>
        <taxon>Corynebacteriaceae</taxon>
        <taxon>Corynebacterium</taxon>
    </lineage>
</organism>
<comment type="similarity">
    <text evidence="1">Belongs to the universal ribosomal protein uS2 family.</text>
</comment>
<feature type="chain" id="PRO_0000134159" description="Small ribosomal subunit protein uS2">
    <location>
        <begin position="1"/>
        <end position="266"/>
    </location>
</feature>
<name>RS2_CORDI</name>
<sequence length="266" mass="29701">MAVVTMRELLDAGVHFGHQTRRWNPKMRRFIFTDRNGIYIIDLQQTLTYIDEAYEFVKETVAHGGTILYVGTKKQAQESVKNEAERVGMPYVNHRWLGGMLTNFQTVSKRLHRMKELQAMDAAENGYEGRTKKEVLMLTRERTKLERVLGGIADMTKTPSAMWVVDTNKEHIAVSEAHKLNIPVVAILDTNCDPDVVNFPVPGNDDAIRSIDVLTKVISHAVIEGKKAREERALAAAKEAAGDANKTEVAAKVEATEEVAAEAEAK</sequence>
<keyword id="KW-1185">Reference proteome</keyword>
<keyword id="KW-0687">Ribonucleoprotein</keyword>
<keyword id="KW-0689">Ribosomal protein</keyword>
<protein>
    <recommendedName>
        <fullName evidence="1">Small ribosomal subunit protein uS2</fullName>
    </recommendedName>
    <alternativeName>
        <fullName evidence="2">30S ribosomal protein S2</fullName>
    </alternativeName>
</protein>
<proteinExistence type="inferred from homology"/>